<feature type="chain" id="PRO_1000051206" description="Small ribosomal subunit protein uS9">
    <location>
        <begin position="1"/>
        <end position="130"/>
    </location>
</feature>
<feature type="region of interest" description="Disordered" evidence="2">
    <location>
        <begin position="102"/>
        <end position="130"/>
    </location>
</feature>
<feature type="compositionally biased region" description="Basic residues" evidence="2">
    <location>
        <begin position="111"/>
        <end position="130"/>
    </location>
</feature>
<name>RS9_CLOBL</name>
<gene>
    <name evidence="1" type="primary">rpsI</name>
    <name type="ordered locus">CLI_3627</name>
</gene>
<sequence length="130" mass="14673">MAKVQYFGTGRRKKSVARVRLVAGDGKVIINNRDIENYFPIETLRVIVNQPLVLTETKDKYDVLVNVHGGGFTGQAGAVRHGISRALVKADENMKSSLKKAGFLTRDPRMKERKKYGLKKARRSPQFSKR</sequence>
<reference key="1">
    <citation type="submission" date="2007-06" db="EMBL/GenBank/DDBJ databases">
        <authorList>
            <person name="Brinkac L.M."/>
            <person name="Daugherty S."/>
            <person name="Dodson R.J."/>
            <person name="Madupu R."/>
            <person name="Brown J.L."/>
            <person name="Bruce D."/>
            <person name="Detter C."/>
            <person name="Munk C."/>
            <person name="Smith L.A."/>
            <person name="Smith T.J."/>
            <person name="White O."/>
            <person name="Brettin T.S."/>
        </authorList>
    </citation>
    <scope>NUCLEOTIDE SEQUENCE [LARGE SCALE GENOMIC DNA]</scope>
    <source>
        <strain>Langeland / NCTC 10281 / Type F</strain>
    </source>
</reference>
<protein>
    <recommendedName>
        <fullName evidence="1">Small ribosomal subunit protein uS9</fullName>
    </recommendedName>
    <alternativeName>
        <fullName evidence="3">30S ribosomal protein S9</fullName>
    </alternativeName>
</protein>
<organism>
    <name type="scientific">Clostridium botulinum (strain Langeland / NCTC 10281 / Type F)</name>
    <dbReference type="NCBI Taxonomy" id="441772"/>
    <lineage>
        <taxon>Bacteria</taxon>
        <taxon>Bacillati</taxon>
        <taxon>Bacillota</taxon>
        <taxon>Clostridia</taxon>
        <taxon>Eubacteriales</taxon>
        <taxon>Clostridiaceae</taxon>
        <taxon>Clostridium</taxon>
    </lineage>
</organism>
<keyword id="KW-0687">Ribonucleoprotein</keyword>
<keyword id="KW-0689">Ribosomal protein</keyword>
<comment type="similarity">
    <text evidence="1">Belongs to the universal ribosomal protein uS9 family.</text>
</comment>
<accession>A7GJ38</accession>
<proteinExistence type="inferred from homology"/>
<evidence type="ECO:0000255" key="1">
    <source>
        <dbReference type="HAMAP-Rule" id="MF_00532"/>
    </source>
</evidence>
<evidence type="ECO:0000256" key="2">
    <source>
        <dbReference type="SAM" id="MobiDB-lite"/>
    </source>
</evidence>
<evidence type="ECO:0000305" key="3"/>
<dbReference type="EMBL" id="CP000728">
    <property type="protein sequence ID" value="ABS42360.1"/>
    <property type="molecule type" value="Genomic_DNA"/>
</dbReference>
<dbReference type="RefSeq" id="WP_003357662.1">
    <property type="nucleotide sequence ID" value="NC_009699.1"/>
</dbReference>
<dbReference type="SMR" id="A7GJ38"/>
<dbReference type="GeneID" id="5184277"/>
<dbReference type="KEGG" id="cbf:CLI_3627"/>
<dbReference type="HOGENOM" id="CLU_046483_2_1_9"/>
<dbReference type="Proteomes" id="UP000002410">
    <property type="component" value="Chromosome"/>
</dbReference>
<dbReference type="GO" id="GO:0022627">
    <property type="term" value="C:cytosolic small ribosomal subunit"/>
    <property type="evidence" value="ECO:0007669"/>
    <property type="project" value="TreeGrafter"/>
</dbReference>
<dbReference type="GO" id="GO:0003723">
    <property type="term" value="F:RNA binding"/>
    <property type="evidence" value="ECO:0007669"/>
    <property type="project" value="TreeGrafter"/>
</dbReference>
<dbReference type="GO" id="GO:0003735">
    <property type="term" value="F:structural constituent of ribosome"/>
    <property type="evidence" value="ECO:0007669"/>
    <property type="project" value="InterPro"/>
</dbReference>
<dbReference type="GO" id="GO:0006412">
    <property type="term" value="P:translation"/>
    <property type="evidence" value="ECO:0007669"/>
    <property type="project" value="UniProtKB-UniRule"/>
</dbReference>
<dbReference type="FunFam" id="3.30.230.10:FF:000001">
    <property type="entry name" value="30S ribosomal protein S9"/>
    <property type="match status" value="1"/>
</dbReference>
<dbReference type="Gene3D" id="3.30.230.10">
    <property type="match status" value="1"/>
</dbReference>
<dbReference type="HAMAP" id="MF_00532_B">
    <property type="entry name" value="Ribosomal_uS9_B"/>
    <property type="match status" value="1"/>
</dbReference>
<dbReference type="InterPro" id="IPR020568">
    <property type="entry name" value="Ribosomal_Su5_D2-typ_SF"/>
</dbReference>
<dbReference type="InterPro" id="IPR000754">
    <property type="entry name" value="Ribosomal_uS9"/>
</dbReference>
<dbReference type="InterPro" id="IPR023035">
    <property type="entry name" value="Ribosomal_uS9_bac/plastid"/>
</dbReference>
<dbReference type="InterPro" id="IPR020574">
    <property type="entry name" value="Ribosomal_uS9_CS"/>
</dbReference>
<dbReference type="InterPro" id="IPR014721">
    <property type="entry name" value="Ribsml_uS5_D2-typ_fold_subgr"/>
</dbReference>
<dbReference type="NCBIfam" id="NF001099">
    <property type="entry name" value="PRK00132.1"/>
    <property type="match status" value="1"/>
</dbReference>
<dbReference type="PANTHER" id="PTHR21569">
    <property type="entry name" value="RIBOSOMAL PROTEIN S9"/>
    <property type="match status" value="1"/>
</dbReference>
<dbReference type="PANTHER" id="PTHR21569:SF1">
    <property type="entry name" value="SMALL RIBOSOMAL SUBUNIT PROTEIN US9M"/>
    <property type="match status" value="1"/>
</dbReference>
<dbReference type="Pfam" id="PF00380">
    <property type="entry name" value="Ribosomal_S9"/>
    <property type="match status" value="1"/>
</dbReference>
<dbReference type="SUPFAM" id="SSF54211">
    <property type="entry name" value="Ribosomal protein S5 domain 2-like"/>
    <property type="match status" value="1"/>
</dbReference>
<dbReference type="PROSITE" id="PS00360">
    <property type="entry name" value="RIBOSOMAL_S9"/>
    <property type="match status" value="1"/>
</dbReference>